<proteinExistence type="predicted"/>
<name>NIRA_EMENI</name>
<evidence type="ECO:0000255" key="1">
    <source>
        <dbReference type="PROSITE-ProRule" id="PRU00227"/>
    </source>
</evidence>
<evidence type="ECO:0000256" key="2">
    <source>
        <dbReference type="SAM" id="MobiDB-lite"/>
    </source>
</evidence>
<evidence type="ECO:0000305" key="3"/>
<gene>
    <name type="primary">nirA</name>
    <name type="ORF">AN0098</name>
</gene>
<comment type="function">
    <text>Pathway-specific regulatory gene of nitrate assimilation; it activates the transcription of the genes for nitrate and nitrite reductases (niaD and niiA).</text>
</comment>
<comment type="subcellular location">
    <subcellularLocation>
        <location>Nucleus</location>
    </subcellularLocation>
</comment>
<comment type="sequence caution" evidence="3">
    <conflict type="erroneous gene model prediction">
        <sequence resource="EMBL-CDS" id="EAA65276"/>
    </conflict>
</comment>
<organism>
    <name type="scientific">Emericella nidulans (strain FGSC A4 / ATCC 38163 / CBS 112.46 / NRRL 194 / M139)</name>
    <name type="common">Aspergillus nidulans</name>
    <dbReference type="NCBI Taxonomy" id="227321"/>
    <lineage>
        <taxon>Eukaryota</taxon>
        <taxon>Fungi</taxon>
        <taxon>Dikarya</taxon>
        <taxon>Ascomycota</taxon>
        <taxon>Pezizomycotina</taxon>
        <taxon>Eurotiomycetes</taxon>
        <taxon>Eurotiomycetidae</taxon>
        <taxon>Eurotiales</taxon>
        <taxon>Aspergillaceae</taxon>
        <taxon>Aspergillus</taxon>
        <taxon>Aspergillus subgen. Nidulantes</taxon>
    </lineage>
</organism>
<accession>P28348</accession>
<accession>C8VQM8</accession>
<accession>Q5BH82</accession>
<reference key="1">
    <citation type="journal article" date="1991" name="Mol. Cell. Biol.">
        <title>nirA, the pathway-specific regulatory gene of nitrate assimilation in Aspergillus nidulans, encodes a putative GAL4-type zinc finger protein and contains four introns in highly conserved regions.</title>
        <authorList>
            <person name="Burger G."/>
            <person name="Strauss J."/>
            <person name="Scazzocchio C."/>
            <person name="Lang B.F."/>
        </authorList>
    </citation>
    <scope>NUCLEOTIDE SEQUENCE [GENOMIC DNA]</scope>
</reference>
<reference key="2">
    <citation type="journal article" date="2005" name="Nature">
        <title>Sequencing of Aspergillus nidulans and comparative analysis with A. fumigatus and A. oryzae.</title>
        <authorList>
            <person name="Galagan J.E."/>
            <person name="Calvo S.E."/>
            <person name="Cuomo C."/>
            <person name="Ma L.-J."/>
            <person name="Wortman J.R."/>
            <person name="Batzoglou S."/>
            <person name="Lee S.-I."/>
            <person name="Bastuerkmen M."/>
            <person name="Spevak C.C."/>
            <person name="Clutterbuck J."/>
            <person name="Kapitonov V."/>
            <person name="Jurka J."/>
            <person name="Scazzocchio C."/>
            <person name="Farman M.L."/>
            <person name="Butler J."/>
            <person name="Purcell S."/>
            <person name="Harris S."/>
            <person name="Braus G.H."/>
            <person name="Draht O."/>
            <person name="Busch S."/>
            <person name="D'Enfert C."/>
            <person name="Bouchier C."/>
            <person name="Goldman G.H."/>
            <person name="Bell-Pedersen D."/>
            <person name="Griffiths-Jones S."/>
            <person name="Doonan J.H."/>
            <person name="Yu J."/>
            <person name="Vienken K."/>
            <person name="Pain A."/>
            <person name="Freitag M."/>
            <person name="Selker E.U."/>
            <person name="Archer D.B."/>
            <person name="Penalva M.A."/>
            <person name="Oakley B.R."/>
            <person name="Momany M."/>
            <person name="Tanaka T."/>
            <person name="Kumagai T."/>
            <person name="Asai K."/>
            <person name="Machida M."/>
            <person name="Nierman W.C."/>
            <person name="Denning D.W."/>
            <person name="Caddick M.X."/>
            <person name="Hynes M."/>
            <person name="Paoletti M."/>
            <person name="Fischer R."/>
            <person name="Miller B.L."/>
            <person name="Dyer P.S."/>
            <person name="Sachs M.S."/>
            <person name="Osmani S.A."/>
            <person name="Birren B.W."/>
        </authorList>
    </citation>
    <scope>NUCLEOTIDE SEQUENCE [LARGE SCALE GENOMIC DNA]</scope>
    <source>
        <strain>FGSC A4 / ATCC 38163 / CBS 112.46 / NRRL 194 / M139</strain>
    </source>
</reference>
<reference key="3">
    <citation type="journal article" date="2009" name="Fungal Genet. Biol.">
        <title>The 2008 update of the Aspergillus nidulans genome annotation: a community effort.</title>
        <authorList>
            <person name="Wortman J.R."/>
            <person name="Gilsenan J.M."/>
            <person name="Joardar V."/>
            <person name="Deegan J."/>
            <person name="Clutterbuck J."/>
            <person name="Andersen M.R."/>
            <person name="Archer D."/>
            <person name="Bencina M."/>
            <person name="Braus G."/>
            <person name="Coutinho P."/>
            <person name="von Dohren H."/>
            <person name="Doonan J."/>
            <person name="Driessen A.J."/>
            <person name="Durek P."/>
            <person name="Espeso E."/>
            <person name="Fekete E."/>
            <person name="Flipphi M."/>
            <person name="Estrada C.G."/>
            <person name="Geysens S."/>
            <person name="Goldman G."/>
            <person name="de Groot P.W."/>
            <person name="Hansen K."/>
            <person name="Harris S.D."/>
            <person name="Heinekamp T."/>
            <person name="Helmstaedt K."/>
            <person name="Henrissat B."/>
            <person name="Hofmann G."/>
            <person name="Homan T."/>
            <person name="Horio T."/>
            <person name="Horiuchi H."/>
            <person name="James S."/>
            <person name="Jones M."/>
            <person name="Karaffa L."/>
            <person name="Karanyi Z."/>
            <person name="Kato M."/>
            <person name="Keller N."/>
            <person name="Kelly D.E."/>
            <person name="Kiel J.A."/>
            <person name="Kim J.M."/>
            <person name="van der Klei I.J."/>
            <person name="Klis F.M."/>
            <person name="Kovalchuk A."/>
            <person name="Krasevec N."/>
            <person name="Kubicek C.P."/>
            <person name="Liu B."/>
            <person name="Maccabe A."/>
            <person name="Meyer V."/>
            <person name="Mirabito P."/>
            <person name="Miskei M."/>
            <person name="Mos M."/>
            <person name="Mullins J."/>
            <person name="Nelson D.R."/>
            <person name="Nielsen J."/>
            <person name="Oakley B.R."/>
            <person name="Osmani S.A."/>
            <person name="Pakula T."/>
            <person name="Paszewski A."/>
            <person name="Paulsen I."/>
            <person name="Pilsyk S."/>
            <person name="Pocsi I."/>
            <person name="Punt P.J."/>
            <person name="Ram A.F."/>
            <person name="Ren Q."/>
            <person name="Robellet X."/>
            <person name="Robson G."/>
            <person name="Seiboth B."/>
            <person name="van Solingen P."/>
            <person name="Specht T."/>
            <person name="Sun J."/>
            <person name="Taheri-Talesh N."/>
            <person name="Takeshita N."/>
            <person name="Ussery D."/>
            <person name="vanKuyk P.A."/>
            <person name="Visser H."/>
            <person name="van de Vondervoort P.J."/>
            <person name="de Vries R.P."/>
            <person name="Walton J."/>
            <person name="Xiang X."/>
            <person name="Xiong Y."/>
            <person name="Zeng A.P."/>
            <person name="Brandt B.W."/>
            <person name="Cornell M.J."/>
            <person name="van den Hondel C.A."/>
            <person name="Visser J."/>
            <person name="Oliver S.G."/>
            <person name="Turner G."/>
        </authorList>
    </citation>
    <scope>GENOME REANNOTATION</scope>
    <source>
        <strain>FGSC A4 / ATCC 38163 / CBS 112.46 / NRRL 194 / M139</strain>
    </source>
</reference>
<keyword id="KW-0010">Activator</keyword>
<keyword id="KW-0238">DNA-binding</keyword>
<keyword id="KW-0479">Metal-binding</keyword>
<keyword id="KW-0534">Nitrate assimilation</keyword>
<keyword id="KW-0539">Nucleus</keyword>
<keyword id="KW-1185">Reference proteome</keyword>
<keyword id="KW-0804">Transcription</keyword>
<keyword id="KW-0805">Transcription regulation</keyword>
<keyword id="KW-0862">Zinc</keyword>
<feature type="chain" id="PRO_0000114959" description="Nitrogen assimilation transcription factor nirA">
    <location>
        <begin position="1"/>
        <end position="892"/>
    </location>
</feature>
<feature type="DNA-binding region" description="Zn(2)-C6 fungal-type" evidence="1">
    <location>
        <begin position="42"/>
        <end position="70"/>
    </location>
</feature>
<feature type="region of interest" description="Disordered" evidence="2">
    <location>
        <begin position="1"/>
        <end position="32"/>
    </location>
</feature>
<feature type="region of interest" description="Disordered" evidence="2">
    <location>
        <begin position="646"/>
        <end position="714"/>
    </location>
</feature>
<feature type="region of interest" description="Disordered" evidence="2">
    <location>
        <begin position="731"/>
        <end position="761"/>
    </location>
</feature>
<feature type="region of interest" description="Disordered" evidence="2">
    <location>
        <begin position="842"/>
        <end position="892"/>
    </location>
</feature>
<feature type="compositionally biased region" description="Low complexity" evidence="2">
    <location>
        <begin position="16"/>
        <end position="27"/>
    </location>
</feature>
<feature type="compositionally biased region" description="Low complexity" evidence="2">
    <location>
        <begin position="649"/>
        <end position="674"/>
    </location>
</feature>
<feature type="compositionally biased region" description="Polar residues" evidence="2">
    <location>
        <begin position="675"/>
        <end position="714"/>
    </location>
</feature>
<feature type="compositionally biased region" description="Polar residues" evidence="2">
    <location>
        <begin position="746"/>
        <end position="761"/>
    </location>
</feature>
<feature type="compositionally biased region" description="Polar residues" evidence="2">
    <location>
        <begin position="876"/>
        <end position="892"/>
    </location>
</feature>
<sequence length="892" mass="99449">MGEKLDPELSSDGPHTKSSSKGQGTSTDNAPASKRRCVSTACIACRRRKSKCDGNLPSCAACSSVYHTTCVYDPNSDHRRKGVYKKDTDTLRTKNSTLLTLIQALLNYEEEDAFDLVRQIRSCDNLEDVAQSLVNQEKKSSGWLSNAVIHEENDIAQTDQFESELAGKMSNLVLDGSRKFIGGTSNLIFLPPGSELNEFKPGLATNGDLEGSVTRWTTVTDDQQLISHLLTMYFSWHYPFFTTLSKELFYRDYSRGVPSQYCSSLLVNTMLALGCHFSSWPGAREDPDNSATAGDHFFKEAKRLILDNDELVNSKLCTVQALALMSVREAGCGREGKGWVYSGMSFRMAFDLGLNLESSSLRDLSEEEIDARRITFWGCFLFDKCWSNYLGRQPQFTTANTSVSAVDILPNEESTLWSPYSDMGPSREYAQPSRTRAVADQISQLCKISGDLVVFFYDLAPKEKPSSKQLELKKLSEIHTRLEAWKKGLPKELEPREGQLPQALLMHMFYQLLLIHLYRPFLKYTKSTSPLPQHVSPRKLCTQAAAAISKLLRLYKRTYGFKQICNIAVYIAHTALTIHLLNLPEKNAQRDVIHGLRHLEEMGESWLCARRTLRILDISASKWQVQLPREAVIVFEQTHARWGSWGPWDQAASPSTTSDSPPSVSSQSVVATTDLSQPVSQSAGNQPANPSMGTSPNLTQPVASQYSSTPSGPVSVSAMRAVQRSFSAQLAHNEARQPEPTYLRPVSTSYGPVPSTQSAQEQWYSPTEAQFRAFTAAHSMPTTSAQSPLTTFDTPENLVEESQDWWSRDVNALQLGAEDWTQNWNNGLPTTSADWRYVDNVPNIPSTSAPDADYKPPQPPPNMARPNQYPTDPVANVNSNQTNMIFPGSFQR</sequence>
<dbReference type="EMBL" id="M68900">
    <property type="protein sequence ID" value="AAA33317.1"/>
    <property type="molecule type" value="Genomic_DNA"/>
</dbReference>
<dbReference type="EMBL" id="AACD01000004">
    <property type="protein sequence ID" value="EAA65276.1"/>
    <property type="status" value="ALT_SEQ"/>
    <property type="molecule type" value="Genomic_DNA"/>
</dbReference>
<dbReference type="EMBL" id="BN001308">
    <property type="protein sequence ID" value="CBF90203.1"/>
    <property type="molecule type" value="Genomic_DNA"/>
</dbReference>
<dbReference type="PIR" id="A41697">
    <property type="entry name" value="A41697"/>
</dbReference>
<dbReference type="RefSeq" id="XP_050469337.1">
    <property type="nucleotide sequence ID" value="XM_050611071.1"/>
</dbReference>
<dbReference type="RefSeq" id="XP_657702.1">
    <property type="nucleotide sequence ID" value="XM_652610.1"/>
</dbReference>
<dbReference type="FunCoup" id="P28348">
    <property type="interactions" value="223"/>
</dbReference>
<dbReference type="STRING" id="227321.P28348"/>
<dbReference type="MetOSite" id="P28348"/>
<dbReference type="EnsemblFungi" id="CBF90203">
    <property type="protein sequence ID" value="CBF90203"/>
    <property type="gene ID" value="ANIA_00098"/>
</dbReference>
<dbReference type="GeneID" id="2875872"/>
<dbReference type="VEuPathDB" id="FungiDB:AN0098"/>
<dbReference type="eggNOG" id="ENOG502QW0K">
    <property type="taxonomic scope" value="Eukaryota"/>
</dbReference>
<dbReference type="HOGENOM" id="CLU_007003_6_0_1"/>
<dbReference type="InParanoid" id="P28348"/>
<dbReference type="OMA" id="YIAHTAC"/>
<dbReference type="OrthoDB" id="2162761at2759"/>
<dbReference type="Proteomes" id="UP000000560">
    <property type="component" value="Chromosome VIII"/>
</dbReference>
<dbReference type="GO" id="GO:0005634">
    <property type="term" value="C:nucleus"/>
    <property type="evidence" value="ECO:0000314"/>
    <property type="project" value="AspGD"/>
</dbReference>
<dbReference type="GO" id="GO:0003677">
    <property type="term" value="F:DNA binding"/>
    <property type="evidence" value="ECO:0007669"/>
    <property type="project" value="UniProtKB-KW"/>
</dbReference>
<dbReference type="GO" id="GO:0003700">
    <property type="term" value="F:DNA-binding transcription factor activity"/>
    <property type="evidence" value="ECO:0000314"/>
    <property type="project" value="CACAO"/>
</dbReference>
<dbReference type="GO" id="GO:0000981">
    <property type="term" value="F:DNA-binding transcription factor activity, RNA polymerase II-specific"/>
    <property type="evidence" value="ECO:0007669"/>
    <property type="project" value="InterPro"/>
</dbReference>
<dbReference type="GO" id="GO:0008270">
    <property type="term" value="F:zinc ion binding"/>
    <property type="evidence" value="ECO:0007669"/>
    <property type="project" value="InterPro"/>
</dbReference>
<dbReference type="GO" id="GO:0006338">
    <property type="term" value="P:chromatin remodeling"/>
    <property type="evidence" value="ECO:0000315"/>
    <property type="project" value="AspGD"/>
</dbReference>
<dbReference type="GO" id="GO:0006351">
    <property type="term" value="P:DNA-templated transcription"/>
    <property type="evidence" value="ECO:0007669"/>
    <property type="project" value="InterPro"/>
</dbReference>
<dbReference type="GO" id="GO:0042128">
    <property type="term" value="P:nitrate assimilation"/>
    <property type="evidence" value="ECO:0007669"/>
    <property type="project" value="UniProtKB-KW"/>
</dbReference>
<dbReference type="GO" id="GO:0006808">
    <property type="term" value="P:regulation of nitrogen utilization"/>
    <property type="evidence" value="ECO:0000315"/>
    <property type="project" value="AspGD"/>
</dbReference>
<dbReference type="CDD" id="cd12148">
    <property type="entry name" value="fungal_TF_MHR"/>
    <property type="match status" value="1"/>
</dbReference>
<dbReference type="CDD" id="cd00067">
    <property type="entry name" value="GAL4"/>
    <property type="match status" value="1"/>
</dbReference>
<dbReference type="FunFam" id="4.10.240.10:FF:000015">
    <property type="entry name" value="Nitrogen assimilation transcription factor nirA"/>
    <property type="match status" value="1"/>
</dbReference>
<dbReference type="Gene3D" id="4.10.240.10">
    <property type="entry name" value="Zn(2)-C6 fungal-type DNA-binding domain"/>
    <property type="match status" value="1"/>
</dbReference>
<dbReference type="InterPro" id="IPR051615">
    <property type="entry name" value="Transcr_Regulatory_Elem"/>
</dbReference>
<dbReference type="InterPro" id="IPR007219">
    <property type="entry name" value="Transcription_factor_dom_fun"/>
</dbReference>
<dbReference type="InterPro" id="IPR036864">
    <property type="entry name" value="Zn2-C6_fun-type_DNA-bd_sf"/>
</dbReference>
<dbReference type="InterPro" id="IPR001138">
    <property type="entry name" value="Zn2Cys6_DnaBD"/>
</dbReference>
<dbReference type="PANTHER" id="PTHR31313">
    <property type="entry name" value="TY1 ENHANCER ACTIVATOR"/>
    <property type="match status" value="1"/>
</dbReference>
<dbReference type="PANTHER" id="PTHR31313:SF81">
    <property type="entry name" value="TY1 ENHANCER ACTIVATOR"/>
    <property type="match status" value="1"/>
</dbReference>
<dbReference type="Pfam" id="PF04082">
    <property type="entry name" value="Fungal_trans"/>
    <property type="match status" value="1"/>
</dbReference>
<dbReference type="Pfam" id="PF00172">
    <property type="entry name" value="Zn_clus"/>
    <property type="match status" value="1"/>
</dbReference>
<dbReference type="SMART" id="SM00906">
    <property type="entry name" value="Fungal_trans"/>
    <property type="match status" value="1"/>
</dbReference>
<dbReference type="SMART" id="SM00066">
    <property type="entry name" value="GAL4"/>
    <property type="match status" value="1"/>
</dbReference>
<dbReference type="SUPFAM" id="SSF57701">
    <property type="entry name" value="Zn2/Cys6 DNA-binding domain"/>
    <property type="match status" value="1"/>
</dbReference>
<dbReference type="PROSITE" id="PS00463">
    <property type="entry name" value="ZN2_CY6_FUNGAL_1"/>
    <property type="match status" value="1"/>
</dbReference>
<dbReference type="PROSITE" id="PS50048">
    <property type="entry name" value="ZN2_CY6_FUNGAL_2"/>
    <property type="match status" value="1"/>
</dbReference>
<protein>
    <recommendedName>
        <fullName>Nitrogen assimilation transcription factor nirA</fullName>
    </recommendedName>
</protein>